<proteinExistence type="inferred from homology"/>
<reference key="1">
    <citation type="journal article" date="2004" name="Proc. Natl. Acad. Sci. U.S.A.">
        <title>Insights into the evolution of Yersinia pestis through whole-genome comparison with Yersinia pseudotuberculosis.</title>
        <authorList>
            <person name="Chain P.S.G."/>
            <person name="Carniel E."/>
            <person name="Larimer F.W."/>
            <person name="Lamerdin J."/>
            <person name="Stoutland P.O."/>
            <person name="Regala W.M."/>
            <person name="Georgescu A.M."/>
            <person name="Vergez L.M."/>
            <person name="Land M.L."/>
            <person name="Motin V.L."/>
            <person name="Brubaker R.R."/>
            <person name="Fowler J."/>
            <person name="Hinnebusch J."/>
            <person name="Marceau M."/>
            <person name="Medigue C."/>
            <person name="Simonet M."/>
            <person name="Chenal-Francisque V."/>
            <person name="Souza B."/>
            <person name="Dacheux D."/>
            <person name="Elliott J.M."/>
            <person name="Derbise A."/>
            <person name="Hauser L.J."/>
            <person name="Garcia E."/>
        </authorList>
    </citation>
    <scope>NUCLEOTIDE SEQUENCE [LARGE SCALE GENOMIC DNA]</scope>
    <source>
        <strain>IP32953</strain>
    </source>
</reference>
<gene>
    <name evidence="1" type="primary">sucC</name>
    <name type="ordered locus">YPTB1149</name>
</gene>
<organism>
    <name type="scientific">Yersinia pseudotuberculosis serotype I (strain IP32953)</name>
    <dbReference type="NCBI Taxonomy" id="273123"/>
    <lineage>
        <taxon>Bacteria</taxon>
        <taxon>Pseudomonadati</taxon>
        <taxon>Pseudomonadota</taxon>
        <taxon>Gammaproteobacteria</taxon>
        <taxon>Enterobacterales</taxon>
        <taxon>Yersiniaceae</taxon>
        <taxon>Yersinia</taxon>
    </lineage>
</organism>
<comment type="function">
    <text evidence="1">Succinyl-CoA synthetase functions in the citric acid cycle (TCA), coupling the hydrolysis of succinyl-CoA to the synthesis of either ATP or GTP and thus represents the only step of substrate-level phosphorylation in the TCA. The beta subunit provides nucleotide specificity of the enzyme and binds the substrate succinate, while the binding sites for coenzyme A and phosphate are found in the alpha subunit.</text>
</comment>
<comment type="catalytic activity">
    <reaction evidence="1">
        <text>succinate + ATP + CoA = succinyl-CoA + ADP + phosphate</text>
        <dbReference type="Rhea" id="RHEA:17661"/>
        <dbReference type="ChEBI" id="CHEBI:30031"/>
        <dbReference type="ChEBI" id="CHEBI:30616"/>
        <dbReference type="ChEBI" id="CHEBI:43474"/>
        <dbReference type="ChEBI" id="CHEBI:57287"/>
        <dbReference type="ChEBI" id="CHEBI:57292"/>
        <dbReference type="ChEBI" id="CHEBI:456216"/>
        <dbReference type="EC" id="6.2.1.5"/>
    </reaction>
    <physiologicalReaction direction="right-to-left" evidence="1">
        <dbReference type="Rhea" id="RHEA:17663"/>
    </physiologicalReaction>
</comment>
<comment type="catalytic activity">
    <reaction evidence="1">
        <text>GTP + succinate + CoA = succinyl-CoA + GDP + phosphate</text>
        <dbReference type="Rhea" id="RHEA:22120"/>
        <dbReference type="ChEBI" id="CHEBI:30031"/>
        <dbReference type="ChEBI" id="CHEBI:37565"/>
        <dbReference type="ChEBI" id="CHEBI:43474"/>
        <dbReference type="ChEBI" id="CHEBI:57287"/>
        <dbReference type="ChEBI" id="CHEBI:57292"/>
        <dbReference type="ChEBI" id="CHEBI:58189"/>
    </reaction>
    <physiologicalReaction direction="right-to-left" evidence="1">
        <dbReference type="Rhea" id="RHEA:22122"/>
    </physiologicalReaction>
</comment>
<comment type="cofactor">
    <cofactor evidence="1">
        <name>Mg(2+)</name>
        <dbReference type="ChEBI" id="CHEBI:18420"/>
    </cofactor>
    <text evidence="1">Binds 1 Mg(2+) ion per subunit.</text>
</comment>
<comment type="pathway">
    <text evidence="1">Carbohydrate metabolism; tricarboxylic acid cycle; succinate from succinyl-CoA (ligase route): step 1/1.</text>
</comment>
<comment type="subunit">
    <text evidence="1">Heterotetramer of two alpha and two beta subunits.</text>
</comment>
<comment type="similarity">
    <text evidence="1">Belongs to the succinate/malate CoA ligase beta subunit family.</text>
</comment>
<feature type="chain" id="PRO_0000102881" description="Succinate--CoA ligase [ADP-forming] subunit beta">
    <location>
        <begin position="1"/>
        <end position="388"/>
    </location>
</feature>
<feature type="domain" description="ATP-grasp" evidence="1">
    <location>
        <begin position="9"/>
        <end position="244"/>
    </location>
</feature>
<feature type="binding site" evidence="1">
    <location>
        <position position="46"/>
    </location>
    <ligand>
        <name>ATP</name>
        <dbReference type="ChEBI" id="CHEBI:30616"/>
    </ligand>
</feature>
<feature type="binding site" evidence="1">
    <location>
        <begin position="53"/>
        <end position="55"/>
    </location>
    <ligand>
        <name>ATP</name>
        <dbReference type="ChEBI" id="CHEBI:30616"/>
    </ligand>
</feature>
<feature type="binding site" evidence="1">
    <location>
        <position position="99"/>
    </location>
    <ligand>
        <name>ATP</name>
        <dbReference type="ChEBI" id="CHEBI:30616"/>
    </ligand>
</feature>
<feature type="binding site" evidence="1">
    <location>
        <position position="102"/>
    </location>
    <ligand>
        <name>ATP</name>
        <dbReference type="ChEBI" id="CHEBI:30616"/>
    </ligand>
</feature>
<feature type="binding site" evidence="1">
    <location>
        <position position="107"/>
    </location>
    <ligand>
        <name>ATP</name>
        <dbReference type="ChEBI" id="CHEBI:30616"/>
    </ligand>
</feature>
<feature type="binding site" evidence="1">
    <location>
        <position position="199"/>
    </location>
    <ligand>
        <name>Mg(2+)</name>
        <dbReference type="ChEBI" id="CHEBI:18420"/>
    </ligand>
</feature>
<feature type="binding site" evidence="1">
    <location>
        <position position="213"/>
    </location>
    <ligand>
        <name>Mg(2+)</name>
        <dbReference type="ChEBI" id="CHEBI:18420"/>
    </ligand>
</feature>
<feature type="binding site" evidence="1">
    <location>
        <position position="264"/>
    </location>
    <ligand>
        <name>substrate</name>
        <note>ligand shared with subunit alpha</note>
    </ligand>
</feature>
<feature type="binding site" evidence="1">
    <location>
        <begin position="321"/>
        <end position="323"/>
    </location>
    <ligand>
        <name>substrate</name>
        <note>ligand shared with subunit alpha</note>
    </ligand>
</feature>
<evidence type="ECO:0000255" key="1">
    <source>
        <dbReference type="HAMAP-Rule" id="MF_00558"/>
    </source>
</evidence>
<sequence length="388" mass="41406">MNLHEYQAKQLFARYGMPAPTGYACTTPREAEEAASKIGAGPWVVKCQVHAGGRGKAGGVKLVNSKEDIRAFAEQWLGKKLVTYQTDANGQPVHQILVEAATDIDKELYLGAVIDRSSRRVVFMASTEGGVEIEKVAEETPELIHKIALDPLTGPQPYQGRELAFKLGLTGKQVGQFTKIFMGLATLFLERDLAMVEINPLVVTKQGDLICLDGKLGADGNALFRQPELREMRDPSQEDAREAHAAQWELNYVALDGNIGCMVNGAGLAMGTMDIVKLHGGEPANFLDVGGGATKERVTEAFKIILSDDKVKAVFVNIFGGIVRCDLIADGIIGAVEEVGVNVPVVVRLEGNNAELGAKKLADSGLNIIAATSLTDAAQQVVAAVGAK</sequence>
<accession>Q66DA0</accession>
<keyword id="KW-0067">ATP-binding</keyword>
<keyword id="KW-0436">Ligase</keyword>
<keyword id="KW-0460">Magnesium</keyword>
<keyword id="KW-0479">Metal-binding</keyword>
<keyword id="KW-0547">Nucleotide-binding</keyword>
<keyword id="KW-0816">Tricarboxylic acid cycle</keyword>
<protein>
    <recommendedName>
        <fullName evidence="1">Succinate--CoA ligase [ADP-forming] subunit beta</fullName>
        <ecNumber evidence="1">6.2.1.5</ecNumber>
    </recommendedName>
    <alternativeName>
        <fullName evidence="1">Succinyl-CoA synthetase subunit beta</fullName>
        <shortName evidence="1">SCS-beta</shortName>
    </alternativeName>
</protein>
<name>SUCC_YERPS</name>
<dbReference type="EC" id="6.2.1.5" evidence="1"/>
<dbReference type="EMBL" id="BX936398">
    <property type="protein sequence ID" value="CAH20389.1"/>
    <property type="molecule type" value="Genomic_DNA"/>
</dbReference>
<dbReference type="RefSeq" id="WP_002210728.1">
    <property type="nucleotide sequence ID" value="NZ_CP009712.1"/>
</dbReference>
<dbReference type="SMR" id="Q66DA0"/>
<dbReference type="GeneID" id="57977251"/>
<dbReference type="KEGG" id="ypo:BZ17_1388"/>
<dbReference type="KEGG" id="yps:YPTB1149"/>
<dbReference type="PATRIC" id="fig|273123.14.peg.1473"/>
<dbReference type="UniPathway" id="UPA00223">
    <property type="reaction ID" value="UER00999"/>
</dbReference>
<dbReference type="Proteomes" id="UP000001011">
    <property type="component" value="Chromosome"/>
</dbReference>
<dbReference type="GO" id="GO:0005829">
    <property type="term" value="C:cytosol"/>
    <property type="evidence" value="ECO:0007669"/>
    <property type="project" value="TreeGrafter"/>
</dbReference>
<dbReference type="GO" id="GO:0042709">
    <property type="term" value="C:succinate-CoA ligase complex"/>
    <property type="evidence" value="ECO:0007669"/>
    <property type="project" value="TreeGrafter"/>
</dbReference>
<dbReference type="GO" id="GO:0005524">
    <property type="term" value="F:ATP binding"/>
    <property type="evidence" value="ECO:0007669"/>
    <property type="project" value="UniProtKB-UniRule"/>
</dbReference>
<dbReference type="GO" id="GO:0000287">
    <property type="term" value="F:magnesium ion binding"/>
    <property type="evidence" value="ECO:0007669"/>
    <property type="project" value="UniProtKB-UniRule"/>
</dbReference>
<dbReference type="GO" id="GO:0004775">
    <property type="term" value="F:succinate-CoA ligase (ADP-forming) activity"/>
    <property type="evidence" value="ECO:0007669"/>
    <property type="project" value="UniProtKB-UniRule"/>
</dbReference>
<dbReference type="GO" id="GO:0004776">
    <property type="term" value="F:succinate-CoA ligase (GDP-forming) activity"/>
    <property type="evidence" value="ECO:0007669"/>
    <property type="project" value="RHEA"/>
</dbReference>
<dbReference type="GO" id="GO:0006104">
    <property type="term" value="P:succinyl-CoA metabolic process"/>
    <property type="evidence" value="ECO:0007669"/>
    <property type="project" value="TreeGrafter"/>
</dbReference>
<dbReference type="GO" id="GO:0006099">
    <property type="term" value="P:tricarboxylic acid cycle"/>
    <property type="evidence" value="ECO:0007669"/>
    <property type="project" value="UniProtKB-UniRule"/>
</dbReference>
<dbReference type="FunFam" id="3.30.1490.20:FF:000002">
    <property type="entry name" value="Succinate--CoA ligase [ADP-forming] subunit beta"/>
    <property type="match status" value="1"/>
</dbReference>
<dbReference type="FunFam" id="3.30.470.20:FF:000002">
    <property type="entry name" value="Succinate--CoA ligase [ADP-forming] subunit beta"/>
    <property type="match status" value="1"/>
</dbReference>
<dbReference type="FunFam" id="3.40.50.261:FF:000001">
    <property type="entry name" value="Succinate--CoA ligase [ADP-forming] subunit beta"/>
    <property type="match status" value="1"/>
</dbReference>
<dbReference type="Gene3D" id="3.30.1490.20">
    <property type="entry name" value="ATP-grasp fold, A domain"/>
    <property type="match status" value="1"/>
</dbReference>
<dbReference type="Gene3D" id="3.30.470.20">
    <property type="entry name" value="ATP-grasp fold, B domain"/>
    <property type="match status" value="1"/>
</dbReference>
<dbReference type="Gene3D" id="3.40.50.261">
    <property type="entry name" value="Succinyl-CoA synthetase domains"/>
    <property type="match status" value="1"/>
</dbReference>
<dbReference type="HAMAP" id="MF_00558">
    <property type="entry name" value="Succ_CoA_beta"/>
    <property type="match status" value="1"/>
</dbReference>
<dbReference type="InterPro" id="IPR011761">
    <property type="entry name" value="ATP-grasp"/>
</dbReference>
<dbReference type="InterPro" id="IPR013650">
    <property type="entry name" value="ATP-grasp_succ-CoA_synth-type"/>
</dbReference>
<dbReference type="InterPro" id="IPR013815">
    <property type="entry name" value="ATP_grasp_subdomain_1"/>
</dbReference>
<dbReference type="InterPro" id="IPR017866">
    <property type="entry name" value="Succ-CoA_synthase_bsu_CS"/>
</dbReference>
<dbReference type="InterPro" id="IPR005811">
    <property type="entry name" value="SUCC_ACL_C"/>
</dbReference>
<dbReference type="InterPro" id="IPR005809">
    <property type="entry name" value="Succ_CoA_ligase-like_bsu"/>
</dbReference>
<dbReference type="InterPro" id="IPR016102">
    <property type="entry name" value="Succinyl-CoA_synth-like"/>
</dbReference>
<dbReference type="NCBIfam" id="NF001913">
    <property type="entry name" value="PRK00696.1"/>
    <property type="match status" value="1"/>
</dbReference>
<dbReference type="NCBIfam" id="TIGR01016">
    <property type="entry name" value="sucCoAbeta"/>
    <property type="match status" value="1"/>
</dbReference>
<dbReference type="PANTHER" id="PTHR11815:SF10">
    <property type="entry name" value="SUCCINATE--COA LIGASE [GDP-FORMING] SUBUNIT BETA, MITOCHONDRIAL"/>
    <property type="match status" value="1"/>
</dbReference>
<dbReference type="PANTHER" id="PTHR11815">
    <property type="entry name" value="SUCCINYL-COA SYNTHETASE BETA CHAIN"/>
    <property type="match status" value="1"/>
</dbReference>
<dbReference type="Pfam" id="PF08442">
    <property type="entry name" value="ATP-grasp_2"/>
    <property type="match status" value="1"/>
</dbReference>
<dbReference type="Pfam" id="PF00549">
    <property type="entry name" value="Ligase_CoA"/>
    <property type="match status" value="1"/>
</dbReference>
<dbReference type="PIRSF" id="PIRSF001554">
    <property type="entry name" value="SucCS_beta"/>
    <property type="match status" value="1"/>
</dbReference>
<dbReference type="SUPFAM" id="SSF56059">
    <property type="entry name" value="Glutathione synthetase ATP-binding domain-like"/>
    <property type="match status" value="1"/>
</dbReference>
<dbReference type="SUPFAM" id="SSF52210">
    <property type="entry name" value="Succinyl-CoA synthetase domains"/>
    <property type="match status" value="1"/>
</dbReference>
<dbReference type="PROSITE" id="PS50975">
    <property type="entry name" value="ATP_GRASP"/>
    <property type="match status" value="1"/>
</dbReference>
<dbReference type="PROSITE" id="PS01217">
    <property type="entry name" value="SUCCINYL_COA_LIG_3"/>
    <property type="match status" value="1"/>
</dbReference>